<accession>Q4K4X2</accession>
<proteinExistence type="inferred from homology"/>
<organism>
    <name type="scientific">Pseudomonas fluorescens (strain ATCC BAA-477 / NRRL B-23932 / Pf-5)</name>
    <dbReference type="NCBI Taxonomy" id="220664"/>
    <lineage>
        <taxon>Bacteria</taxon>
        <taxon>Pseudomonadati</taxon>
        <taxon>Pseudomonadota</taxon>
        <taxon>Gammaproteobacteria</taxon>
        <taxon>Pseudomonadales</taxon>
        <taxon>Pseudomonadaceae</taxon>
        <taxon>Pseudomonas</taxon>
    </lineage>
</organism>
<name>GLPE_PSEF5</name>
<keyword id="KW-0963">Cytoplasm</keyword>
<keyword id="KW-0808">Transferase</keyword>
<sequence length="109" mass="11925">MSEFKRIPPEQAQALREQGAVVVDIRDPQTYALNHISGSQHLDNHSISDFIRAADLDAPLVVVCYHGNSSQSAAAYLVSQGFSDVYSLDGGFELWRSTYPAETAQGNPE</sequence>
<evidence type="ECO:0000255" key="1">
    <source>
        <dbReference type="HAMAP-Rule" id="MF_01009"/>
    </source>
</evidence>
<feature type="chain" id="PRO_1000062970" description="Thiosulfate sulfurtransferase GlpE">
    <location>
        <begin position="1"/>
        <end position="109"/>
    </location>
</feature>
<feature type="domain" description="Rhodanese" evidence="1">
    <location>
        <begin position="16"/>
        <end position="104"/>
    </location>
</feature>
<feature type="active site" description="Cysteine persulfide intermediate" evidence="1">
    <location>
        <position position="64"/>
    </location>
</feature>
<comment type="function">
    <text evidence="1">Transferase that catalyzes the transfer of sulfur from thiosulfate to thiophilic acceptors such as cyanide or dithiols. May function in a CysM-independent thiosulfate assimilation pathway by catalyzing the conversion of thiosulfate to sulfite, which can then be used for L-cysteine biosynthesis.</text>
</comment>
<comment type="catalytic activity">
    <reaction evidence="1">
        <text>thiosulfate + hydrogen cyanide = thiocyanate + sulfite + 2 H(+)</text>
        <dbReference type="Rhea" id="RHEA:16881"/>
        <dbReference type="ChEBI" id="CHEBI:15378"/>
        <dbReference type="ChEBI" id="CHEBI:17359"/>
        <dbReference type="ChEBI" id="CHEBI:18022"/>
        <dbReference type="ChEBI" id="CHEBI:18407"/>
        <dbReference type="ChEBI" id="CHEBI:33542"/>
        <dbReference type="EC" id="2.8.1.1"/>
    </reaction>
</comment>
<comment type="catalytic activity">
    <reaction evidence="1">
        <text>thiosulfate + [thioredoxin]-dithiol = [thioredoxin]-disulfide + hydrogen sulfide + sulfite + 2 H(+)</text>
        <dbReference type="Rhea" id="RHEA:83859"/>
        <dbReference type="Rhea" id="RHEA-COMP:10698"/>
        <dbReference type="Rhea" id="RHEA-COMP:10700"/>
        <dbReference type="ChEBI" id="CHEBI:15378"/>
        <dbReference type="ChEBI" id="CHEBI:17359"/>
        <dbReference type="ChEBI" id="CHEBI:29919"/>
        <dbReference type="ChEBI" id="CHEBI:29950"/>
        <dbReference type="ChEBI" id="CHEBI:33542"/>
        <dbReference type="ChEBI" id="CHEBI:50058"/>
    </reaction>
</comment>
<comment type="subcellular location">
    <subcellularLocation>
        <location evidence="1">Cytoplasm</location>
    </subcellularLocation>
</comment>
<comment type="similarity">
    <text evidence="1">Belongs to the GlpE family.</text>
</comment>
<reference key="1">
    <citation type="journal article" date="2005" name="Nat. Biotechnol.">
        <title>Complete genome sequence of the plant commensal Pseudomonas fluorescens Pf-5.</title>
        <authorList>
            <person name="Paulsen I.T."/>
            <person name="Press C.M."/>
            <person name="Ravel J."/>
            <person name="Kobayashi D.Y."/>
            <person name="Myers G.S.A."/>
            <person name="Mavrodi D.V."/>
            <person name="DeBoy R.T."/>
            <person name="Seshadri R."/>
            <person name="Ren Q."/>
            <person name="Madupu R."/>
            <person name="Dodson R.J."/>
            <person name="Durkin A.S."/>
            <person name="Brinkac L.M."/>
            <person name="Daugherty S.C."/>
            <person name="Sullivan S.A."/>
            <person name="Rosovitz M.J."/>
            <person name="Gwinn M.L."/>
            <person name="Zhou L."/>
            <person name="Schneider D.J."/>
            <person name="Cartinhour S.W."/>
            <person name="Nelson W.C."/>
            <person name="Weidman J."/>
            <person name="Watkins K."/>
            <person name="Tran K."/>
            <person name="Khouri H."/>
            <person name="Pierson E.A."/>
            <person name="Pierson L.S. III"/>
            <person name="Thomashow L.S."/>
            <person name="Loper J.E."/>
        </authorList>
    </citation>
    <scope>NUCLEOTIDE SEQUENCE [LARGE SCALE GENOMIC DNA]</scope>
    <source>
        <strain>ATCC BAA-477 / NRRL B-23932 / Pf-5</strain>
    </source>
</reference>
<dbReference type="EC" id="2.8.1.1" evidence="1"/>
<dbReference type="EMBL" id="CP000076">
    <property type="protein sequence ID" value="AAY94845.1"/>
    <property type="molecule type" value="Genomic_DNA"/>
</dbReference>
<dbReference type="RefSeq" id="WP_011063830.1">
    <property type="nucleotide sequence ID" value="NC_004129.6"/>
</dbReference>
<dbReference type="SMR" id="Q4K4X2"/>
<dbReference type="STRING" id="220664.PFL_5652"/>
<dbReference type="GeneID" id="57478602"/>
<dbReference type="KEGG" id="pfl:PFL_5652"/>
<dbReference type="PATRIC" id="fig|220664.5.peg.5764"/>
<dbReference type="eggNOG" id="COG0607">
    <property type="taxonomic scope" value="Bacteria"/>
</dbReference>
<dbReference type="HOGENOM" id="CLU_089574_14_0_6"/>
<dbReference type="Proteomes" id="UP000008540">
    <property type="component" value="Chromosome"/>
</dbReference>
<dbReference type="GO" id="GO:0005737">
    <property type="term" value="C:cytoplasm"/>
    <property type="evidence" value="ECO:0007669"/>
    <property type="project" value="UniProtKB-SubCell"/>
</dbReference>
<dbReference type="GO" id="GO:0004792">
    <property type="term" value="F:thiosulfate-cyanide sulfurtransferase activity"/>
    <property type="evidence" value="ECO:0007669"/>
    <property type="project" value="UniProtKB-UniRule"/>
</dbReference>
<dbReference type="GO" id="GO:0006071">
    <property type="term" value="P:glycerol metabolic process"/>
    <property type="evidence" value="ECO:0007669"/>
    <property type="project" value="UniProtKB-UniRule"/>
</dbReference>
<dbReference type="CDD" id="cd01444">
    <property type="entry name" value="GlpE_ST"/>
    <property type="match status" value="1"/>
</dbReference>
<dbReference type="Gene3D" id="3.40.250.10">
    <property type="entry name" value="Rhodanese-like domain"/>
    <property type="match status" value="1"/>
</dbReference>
<dbReference type="HAMAP" id="MF_01009">
    <property type="entry name" value="Thiosulf_sulfurtr"/>
    <property type="match status" value="1"/>
</dbReference>
<dbReference type="InterPro" id="IPR050229">
    <property type="entry name" value="GlpE_sulfurtransferase"/>
</dbReference>
<dbReference type="InterPro" id="IPR001763">
    <property type="entry name" value="Rhodanese-like_dom"/>
</dbReference>
<dbReference type="InterPro" id="IPR036873">
    <property type="entry name" value="Rhodanese-like_dom_sf"/>
</dbReference>
<dbReference type="InterPro" id="IPR023695">
    <property type="entry name" value="Thiosulf_sulfurTrfase"/>
</dbReference>
<dbReference type="NCBIfam" id="NF001195">
    <property type="entry name" value="PRK00162.1"/>
    <property type="match status" value="1"/>
</dbReference>
<dbReference type="PANTHER" id="PTHR43031">
    <property type="entry name" value="FAD-DEPENDENT OXIDOREDUCTASE"/>
    <property type="match status" value="1"/>
</dbReference>
<dbReference type="PANTHER" id="PTHR43031:SF6">
    <property type="entry name" value="THIOSULFATE SULFURTRANSFERASE GLPE"/>
    <property type="match status" value="1"/>
</dbReference>
<dbReference type="Pfam" id="PF00581">
    <property type="entry name" value="Rhodanese"/>
    <property type="match status" value="1"/>
</dbReference>
<dbReference type="SMART" id="SM00450">
    <property type="entry name" value="RHOD"/>
    <property type="match status" value="1"/>
</dbReference>
<dbReference type="SUPFAM" id="SSF52821">
    <property type="entry name" value="Rhodanese/Cell cycle control phosphatase"/>
    <property type="match status" value="1"/>
</dbReference>
<dbReference type="PROSITE" id="PS50206">
    <property type="entry name" value="RHODANESE_3"/>
    <property type="match status" value="1"/>
</dbReference>
<protein>
    <recommendedName>
        <fullName evidence="1">Thiosulfate sulfurtransferase GlpE</fullName>
        <ecNumber evidence="1">2.8.1.1</ecNumber>
    </recommendedName>
</protein>
<gene>
    <name evidence="1" type="primary">glpE</name>
    <name type="ordered locus">PFL_5652</name>
</gene>